<accession>Q8CFY5</accession>
<proteinExistence type="evidence at transcript level"/>
<reference key="1">
    <citation type="journal article" date="2009" name="PLoS Biol.">
        <title>Lineage-specific biology revealed by a finished genome assembly of the mouse.</title>
        <authorList>
            <person name="Church D.M."/>
            <person name="Goodstadt L."/>
            <person name="Hillier L.W."/>
            <person name="Zody M.C."/>
            <person name="Goldstein S."/>
            <person name="She X."/>
            <person name="Bult C.J."/>
            <person name="Agarwala R."/>
            <person name="Cherry J.L."/>
            <person name="DiCuccio M."/>
            <person name="Hlavina W."/>
            <person name="Kapustin Y."/>
            <person name="Meric P."/>
            <person name="Maglott D."/>
            <person name="Birtle Z."/>
            <person name="Marques A.C."/>
            <person name="Graves T."/>
            <person name="Zhou S."/>
            <person name="Teague B."/>
            <person name="Potamousis K."/>
            <person name="Churas C."/>
            <person name="Place M."/>
            <person name="Herschleb J."/>
            <person name="Runnheim R."/>
            <person name="Forrest D."/>
            <person name="Amos-Landgraf J."/>
            <person name="Schwartz D.C."/>
            <person name="Cheng Z."/>
            <person name="Lindblad-Toh K."/>
            <person name="Eichler E.E."/>
            <person name="Ponting C.P."/>
        </authorList>
    </citation>
    <scope>NUCLEOTIDE SEQUENCE [LARGE SCALE GENOMIC DNA]</scope>
    <source>
        <strain>C57BL/6J</strain>
    </source>
</reference>
<reference key="2">
    <citation type="journal article" date="2004" name="Genome Res.">
        <title>The status, quality, and expansion of the NIH full-length cDNA project: the Mammalian Gene Collection (MGC).</title>
        <authorList>
            <consortium name="The MGC Project Team"/>
        </authorList>
    </citation>
    <scope>NUCLEOTIDE SEQUENCE [LARGE SCALE MRNA]</scope>
    <source>
        <strain>FVB/N</strain>
        <tissue>Colon</tissue>
    </source>
</reference>
<dbReference type="EC" id="2.5.1.141" evidence="2"/>
<dbReference type="EMBL" id="AL603889">
    <property type="status" value="NOT_ANNOTATED_CDS"/>
    <property type="molecule type" value="Genomic_DNA"/>
</dbReference>
<dbReference type="EMBL" id="AL663033">
    <property type="status" value="NOT_ANNOTATED_CDS"/>
    <property type="molecule type" value="Genomic_DNA"/>
</dbReference>
<dbReference type="EMBL" id="BC038046">
    <property type="protein sequence ID" value="AAH38046.1"/>
    <property type="molecule type" value="mRNA"/>
</dbReference>
<dbReference type="CCDS" id="CCDS24839.1"/>
<dbReference type="RefSeq" id="NP_848466.1">
    <property type="nucleotide sequence ID" value="NM_178379.3"/>
</dbReference>
<dbReference type="SMR" id="Q8CFY5"/>
<dbReference type="FunCoup" id="Q8CFY5">
    <property type="interactions" value="1982"/>
</dbReference>
<dbReference type="STRING" id="10090.ENSMUSP00000040138"/>
<dbReference type="PhosphoSitePlus" id="Q8CFY5"/>
<dbReference type="PaxDb" id="10090-ENSMUSP00000040138"/>
<dbReference type="ProteomicsDB" id="284100"/>
<dbReference type="Pumba" id="Q8CFY5"/>
<dbReference type="Antibodypedia" id="25099">
    <property type="antibodies" value="222 antibodies from 25 providers"/>
</dbReference>
<dbReference type="DNASU" id="70383"/>
<dbReference type="Ensembl" id="ENSMUST00000049091.9">
    <property type="protein sequence ID" value="ENSMUSP00000040138.9"/>
    <property type="gene ID" value="ENSMUSG00000042148.9"/>
</dbReference>
<dbReference type="GeneID" id="70383"/>
<dbReference type="KEGG" id="mmu:70383"/>
<dbReference type="UCSC" id="uc007jko.2">
    <property type="organism name" value="mouse"/>
</dbReference>
<dbReference type="AGR" id="MGI:1917633"/>
<dbReference type="CTD" id="1352"/>
<dbReference type="MGI" id="MGI:1917633">
    <property type="gene designation" value="Cox10"/>
</dbReference>
<dbReference type="VEuPathDB" id="HostDB:ENSMUSG00000042148"/>
<dbReference type="eggNOG" id="KOG1380">
    <property type="taxonomic scope" value="Eukaryota"/>
</dbReference>
<dbReference type="GeneTree" id="ENSGT00940000153771"/>
<dbReference type="HOGENOM" id="CLU_029631_2_2_1"/>
<dbReference type="InParanoid" id="Q8CFY5"/>
<dbReference type="OMA" id="MGREPDF"/>
<dbReference type="OrthoDB" id="5211at2759"/>
<dbReference type="PhylomeDB" id="Q8CFY5"/>
<dbReference type="TreeFam" id="TF105071"/>
<dbReference type="Reactome" id="R-MMU-189451">
    <property type="pathway name" value="Heme biosynthesis"/>
</dbReference>
<dbReference type="BioGRID-ORCS" id="70383">
    <property type="hits" value="18 hits in 81 CRISPR screens"/>
</dbReference>
<dbReference type="ChiTaRS" id="Cox10">
    <property type="organism name" value="mouse"/>
</dbReference>
<dbReference type="PRO" id="PR:Q8CFY5"/>
<dbReference type="Proteomes" id="UP000000589">
    <property type="component" value="Chromosome 11"/>
</dbReference>
<dbReference type="RNAct" id="Q8CFY5">
    <property type="molecule type" value="protein"/>
</dbReference>
<dbReference type="Bgee" id="ENSMUSG00000042148">
    <property type="expression patterns" value="Expressed in animal zygote and 222 other cell types or tissues"/>
</dbReference>
<dbReference type="ExpressionAtlas" id="Q8CFY5">
    <property type="expression patterns" value="baseline and differential"/>
</dbReference>
<dbReference type="GO" id="GO:0070069">
    <property type="term" value="C:cytochrome complex"/>
    <property type="evidence" value="ECO:0007669"/>
    <property type="project" value="Ensembl"/>
</dbReference>
<dbReference type="GO" id="GO:0005829">
    <property type="term" value="C:cytosol"/>
    <property type="evidence" value="ECO:0007669"/>
    <property type="project" value="Ensembl"/>
</dbReference>
<dbReference type="GO" id="GO:0005759">
    <property type="term" value="C:mitochondrial matrix"/>
    <property type="evidence" value="ECO:0000314"/>
    <property type="project" value="MGI"/>
</dbReference>
<dbReference type="GO" id="GO:0031966">
    <property type="term" value="C:mitochondrial membrane"/>
    <property type="evidence" value="ECO:0007669"/>
    <property type="project" value="UniProtKB-SubCell"/>
</dbReference>
<dbReference type="GO" id="GO:0005739">
    <property type="term" value="C:mitochondrion"/>
    <property type="evidence" value="ECO:0000314"/>
    <property type="project" value="MGI"/>
</dbReference>
<dbReference type="GO" id="GO:0005730">
    <property type="term" value="C:nucleolus"/>
    <property type="evidence" value="ECO:0007669"/>
    <property type="project" value="Ensembl"/>
</dbReference>
<dbReference type="GO" id="GO:0004311">
    <property type="term" value="F:geranylgeranyl diphosphate synthase activity"/>
    <property type="evidence" value="ECO:0000266"/>
    <property type="project" value="MGI"/>
</dbReference>
<dbReference type="GO" id="GO:0008495">
    <property type="term" value="F:protoheme IX farnesyltransferase activity"/>
    <property type="evidence" value="ECO:0000315"/>
    <property type="project" value="MGI"/>
</dbReference>
<dbReference type="GO" id="GO:0009060">
    <property type="term" value="P:aerobic respiration"/>
    <property type="evidence" value="ECO:0000315"/>
    <property type="project" value="MGI"/>
</dbReference>
<dbReference type="GO" id="GO:0055070">
    <property type="term" value="P:copper ion homeostasis"/>
    <property type="evidence" value="ECO:0000315"/>
    <property type="project" value="MGI"/>
</dbReference>
<dbReference type="GO" id="GO:0017004">
    <property type="term" value="P:cytochrome complex assembly"/>
    <property type="evidence" value="ECO:0000314"/>
    <property type="project" value="MGI"/>
</dbReference>
<dbReference type="GO" id="GO:0006784">
    <property type="term" value="P:heme A biosynthetic process"/>
    <property type="evidence" value="ECO:0000314"/>
    <property type="project" value="MGI"/>
</dbReference>
<dbReference type="GO" id="GO:0048034">
    <property type="term" value="P:heme O biosynthetic process"/>
    <property type="evidence" value="ECO:0000316"/>
    <property type="project" value="MGI"/>
</dbReference>
<dbReference type="GO" id="GO:0002521">
    <property type="term" value="P:leukocyte differentiation"/>
    <property type="evidence" value="ECO:0000315"/>
    <property type="project" value="MGI"/>
</dbReference>
<dbReference type="GO" id="GO:0006629">
    <property type="term" value="P:lipid metabolic process"/>
    <property type="evidence" value="ECO:0007669"/>
    <property type="project" value="UniProtKB-KW"/>
</dbReference>
<dbReference type="GO" id="GO:0000266">
    <property type="term" value="P:mitochondrial fission"/>
    <property type="evidence" value="ECO:0000315"/>
    <property type="project" value="MGI"/>
</dbReference>
<dbReference type="GO" id="GO:0007005">
    <property type="term" value="P:mitochondrion organization"/>
    <property type="evidence" value="ECO:0000315"/>
    <property type="project" value="MGI"/>
</dbReference>
<dbReference type="GO" id="GO:0035264">
    <property type="term" value="P:multicellular organism growth"/>
    <property type="evidence" value="ECO:0000315"/>
    <property type="project" value="MGI"/>
</dbReference>
<dbReference type="GO" id="GO:0008535">
    <property type="term" value="P:respiratory chain complex IV assembly"/>
    <property type="evidence" value="ECO:0007669"/>
    <property type="project" value="Ensembl"/>
</dbReference>
<dbReference type="CDD" id="cd13957">
    <property type="entry name" value="PT_UbiA_Cox10"/>
    <property type="match status" value="1"/>
</dbReference>
<dbReference type="FunFam" id="1.10.357.140:FF:000004">
    <property type="entry name" value="Protoheme IX farnesyltransferase, mitochondrial"/>
    <property type="match status" value="1"/>
</dbReference>
<dbReference type="Gene3D" id="1.10.357.140">
    <property type="entry name" value="UbiA prenyltransferase"/>
    <property type="match status" value="1"/>
</dbReference>
<dbReference type="HAMAP" id="MF_00154">
    <property type="entry name" value="CyoE_CtaB"/>
    <property type="match status" value="1"/>
</dbReference>
<dbReference type="InterPro" id="IPR006369">
    <property type="entry name" value="Protohaem_IX_farnesylTrfase"/>
</dbReference>
<dbReference type="InterPro" id="IPR016315">
    <property type="entry name" value="Protohaem_IX_farnesylTrfase_mt"/>
</dbReference>
<dbReference type="InterPro" id="IPR000537">
    <property type="entry name" value="UbiA_prenyltransferase"/>
</dbReference>
<dbReference type="InterPro" id="IPR030470">
    <property type="entry name" value="UbiA_prenylTrfase_CS"/>
</dbReference>
<dbReference type="InterPro" id="IPR044878">
    <property type="entry name" value="UbiA_sf"/>
</dbReference>
<dbReference type="NCBIfam" id="TIGR01473">
    <property type="entry name" value="cyoE_ctaB"/>
    <property type="match status" value="1"/>
</dbReference>
<dbReference type="PANTHER" id="PTHR43448">
    <property type="entry name" value="PROTOHEME IX FARNESYLTRANSFERASE, MITOCHONDRIAL"/>
    <property type="match status" value="1"/>
</dbReference>
<dbReference type="PANTHER" id="PTHR43448:SF2">
    <property type="entry name" value="PROTOHEME IX FARNESYLTRANSFERASE, MITOCHONDRIAL"/>
    <property type="match status" value="1"/>
</dbReference>
<dbReference type="Pfam" id="PF01040">
    <property type="entry name" value="UbiA"/>
    <property type="match status" value="1"/>
</dbReference>
<dbReference type="PIRSF" id="PIRSF001773">
    <property type="entry name" value="COX10"/>
    <property type="match status" value="1"/>
</dbReference>
<dbReference type="PROSITE" id="PS00943">
    <property type="entry name" value="UBIA"/>
    <property type="match status" value="1"/>
</dbReference>
<feature type="transit peptide" description="Mitochondrion" evidence="3">
    <location>
        <begin position="1"/>
        <end status="unknown"/>
    </location>
</feature>
<feature type="chain" id="PRO_0000035924" description="Protoheme IX farnesyltransferase, mitochondrial">
    <location>
        <begin status="unknown"/>
        <end position="443"/>
    </location>
</feature>
<feature type="transmembrane region" description="Helical" evidence="3">
    <location>
        <begin position="174"/>
        <end position="194"/>
    </location>
</feature>
<feature type="transmembrane region" description="Helical" evidence="3">
    <location>
        <begin position="230"/>
        <end position="250"/>
    </location>
</feature>
<feature type="transmembrane region" description="Helical" evidence="3">
    <location>
        <begin position="252"/>
        <end position="272"/>
    </location>
</feature>
<feature type="transmembrane region" description="Helical" evidence="3">
    <location>
        <begin position="286"/>
        <end position="306"/>
    </location>
</feature>
<feature type="transmembrane region" description="Helical" evidence="3">
    <location>
        <begin position="308"/>
        <end position="328"/>
    </location>
</feature>
<feature type="transmembrane region" description="Helical" evidence="3">
    <location>
        <begin position="363"/>
        <end position="383"/>
    </location>
</feature>
<feature type="transmembrane region" description="Helical" evidence="3">
    <location>
        <begin position="410"/>
        <end position="430"/>
    </location>
</feature>
<feature type="region of interest" description="Disordered" evidence="4">
    <location>
        <begin position="68"/>
        <end position="113"/>
    </location>
</feature>
<protein>
    <recommendedName>
        <fullName>Protoheme IX farnesyltransferase, mitochondrial</fullName>
        <ecNumber evidence="2">2.5.1.141</ecNumber>
    </recommendedName>
    <alternativeName>
        <fullName>Heme O synthase</fullName>
    </alternativeName>
</protein>
<comment type="function">
    <text evidence="1">Converts protoheme IX and farnesyl diphosphate to heme O.</text>
</comment>
<comment type="catalytic activity">
    <reaction evidence="2">
        <text>heme b + (2E,6E)-farnesyl diphosphate + H2O = Fe(II)-heme o + diphosphate</text>
        <dbReference type="Rhea" id="RHEA:28070"/>
        <dbReference type="ChEBI" id="CHEBI:15377"/>
        <dbReference type="ChEBI" id="CHEBI:33019"/>
        <dbReference type="ChEBI" id="CHEBI:60344"/>
        <dbReference type="ChEBI" id="CHEBI:60530"/>
        <dbReference type="ChEBI" id="CHEBI:175763"/>
        <dbReference type="EC" id="2.5.1.141"/>
    </reaction>
</comment>
<comment type="subcellular location">
    <subcellularLocation>
        <location evidence="1">Mitochondrion membrane</location>
        <topology evidence="1">Multi-pass membrane protein</topology>
    </subcellularLocation>
</comment>
<comment type="similarity">
    <text evidence="5">Belongs to the UbiA prenyltransferase family.</text>
</comment>
<sequence length="443" mass="48884">MAASPHTISSRLLTGSVGGCIWYLERRAIQGLPHRVTRLFRNVSNQWVTLQHLSFLKRMYVTQLHRGLSQRVKPKPEPPASPFLEHTSSGQARADEDELPSFPAPSRPLSRKPNEELVELEATSIVDHSLDTAKEKKEERQWKEMKLHTDDLPGILARLSKIKLTALVVSTTSAGFALAPGPFDWSCFLLTSLGTGLASCAANSINQFFEVPFDSNMNRTKNRPLVRGQISPLLAVSFATCCAVPGVALLTWGVNPLTGALGVFNIFLYTCCYTPLKRVSITNTWVGAVVGAIPPVMGWTAATGSLDAGALLLGGILYSWQFPHFNALSWGLREDYSRGGYCMMSVTHPALCRRVALRHCLALIALSTAAPVLDITTWVFPVISLPINLYISYLGFRFYVDADRRSSRKLFFCSLWHLPLLLLLMLTCKQRPGQEGDKGEAPS</sequence>
<gene>
    <name type="primary">Cox10</name>
</gene>
<evidence type="ECO:0000250" key="1"/>
<evidence type="ECO:0000250" key="2">
    <source>
        <dbReference type="UniProtKB" id="P24009"/>
    </source>
</evidence>
<evidence type="ECO:0000255" key="3"/>
<evidence type="ECO:0000256" key="4">
    <source>
        <dbReference type="SAM" id="MobiDB-lite"/>
    </source>
</evidence>
<evidence type="ECO:0000305" key="5"/>
<name>COX10_MOUSE</name>
<organism>
    <name type="scientific">Mus musculus</name>
    <name type="common">Mouse</name>
    <dbReference type="NCBI Taxonomy" id="10090"/>
    <lineage>
        <taxon>Eukaryota</taxon>
        <taxon>Metazoa</taxon>
        <taxon>Chordata</taxon>
        <taxon>Craniata</taxon>
        <taxon>Vertebrata</taxon>
        <taxon>Euteleostomi</taxon>
        <taxon>Mammalia</taxon>
        <taxon>Eutheria</taxon>
        <taxon>Euarchontoglires</taxon>
        <taxon>Glires</taxon>
        <taxon>Rodentia</taxon>
        <taxon>Myomorpha</taxon>
        <taxon>Muroidea</taxon>
        <taxon>Muridae</taxon>
        <taxon>Murinae</taxon>
        <taxon>Mus</taxon>
        <taxon>Mus</taxon>
    </lineage>
</organism>
<keyword id="KW-0350">Heme biosynthesis</keyword>
<keyword id="KW-0443">Lipid metabolism</keyword>
<keyword id="KW-0472">Membrane</keyword>
<keyword id="KW-0496">Mitochondrion</keyword>
<keyword id="KW-1185">Reference proteome</keyword>
<keyword id="KW-0808">Transferase</keyword>
<keyword id="KW-0809">Transit peptide</keyword>
<keyword id="KW-0812">Transmembrane</keyword>
<keyword id="KW-1133">Transmembrane helix</keyword>